<keyword id="KW-0002">3D-structure</keyword>
<keyword id="KW-0963">Cytoplasm</keyword>
<keyword id="KW-0903">Direct protein sequencing</keyword>
<keyword id="KW-1185">Reference proteome</keyword>
<keyword id="KW-0808">Transferase</keyword>
<name>GCTB_ACIFV</name>
<sequence length="266" mass="29166">MADYTNYTNKEMQAVTIAKQIKNGQVVTVGTGLPLIGASVAKRVYAPDCHIIVESGLMDCSPVEVPRSVGDLRFMAHCGCIWPNVRFVGFEINEYLHKANRLIAFIGGAQIDPYGNVNSTSIGDYHHPKTRFTGSGGANGIATYSNTIIMMQHEKRRFMNKIDYVTSPGWIDGPGGRERLGLPGDVGPQLVVTDKGILKFDEKTKRMYLAAYYPTSSPEDVLENTGFDLDVSKAVELEAPDPAVIKLIREEIDPGQAFIQVPTEAK</sequence>
<gene>
    <name type="primary">gctB</name>
    <name type="ordered locus">Acfer_1818</name>
</gene>
<reference key="1">
    <citation type="journal article" date="1994" name="Eur. J. Biochem.">
        <title>Location of the two genes encoding glutaconate coenzyme A-transferase at the beginning of the hydroxyglutarate operon in Acidaminococcus fermentans.</title>
        <authorList>
            <person name="Mack M."/>
            <person name="Bendrat K."/>
            <person name="Zelder O."/>
            <person name="Eckel E."/>
            <person name="Linder D."/>
            <person name="Buckel W."/>
        </authorList>
    </citation>
    <scope>NUCLEOTIDE SEQUENCE [GENOMIC DNA]</scope>
    <scope>PROTEIN SEQUENCE OF 2-19 AND 44-66</scope>
</reference>
<reference key="2">
    <citation type="journal article" date="2010" name="Stand. Genomic Sci.">
        <title>Complete genome sequence of Acidaminococcus fermentans type strain (VR4).</title>
        <authorList>
            <person name="Chang Y.J."/>
            <person name="Pukall R."/>
            <person name="Saunders E."/>
            <person name="Lapidus A."/>
            <person name="Copeland A."/>
            <person name="Nolan M."/>
            <person name="Glavina Del Rio T."/>
            <person name="Lucas S."/>
            <person name="Chen F."/>
            <person name="Tice H."/>
            <person name="Cheng J.F."/>
            <person name="Han C."/>
            <person name="Detter J.C."/>
            <person name="Bruce D."/>
            <person name="Goodwin L."/>
            <person name="Pitluck S."/>
            <person name="Mikhailova N."/>
            <person name="Liolios K."/>
            <person name="Pati A."/>
            <person name="Ivanova N."/>
            <person name="Mavromatis K."/>
            <person name="Chen A."/>
            <person name="Palaniappan K."/>
            <person name="Land M."/>
            <person name="Hauser L."/>
            <person name="Jeffries C.D."/>
            <person name="Brettin T."/>
            <person name="Rohde M."/>
            <person name="Goker M."/>
            <person name="Bristow J."/>
            <person name="Eisen J.A."/>
            <person name="Markowitz V."/>
            <person name="Hugenholtz P."/>
            <person name="Kyrpides N.C."/>
            <person name="Klenk H.P."/>
        </authorList>
    </citation>
    <scope>NUCLEOTIDE SEQUENCE [LARGE SCALE GENOMIC DNA]</scope>
    <source>
        <strain>ATCC 25085 / DSM 20731 / CCUG 9996 / CIP 106432 / VR4</strain>
    </source>
</reference>
<reference key="3">
    <citation type="journal article" date="1997" name="Structure">
        <title>Glutaconate CoA-transferase from Acidaminococcus fermentans: the crystal structure reveals homology with other CoA-transferases.</title>
        <authorList>
            <person name="Jacob U."/>
            <person name="Mack M."/>
            <person name="Clausen T."/>
            <person name="Huber R."/>
            <person name="Buckel W."/>
            <person name="Messerschmidt A."/>
        </authorList>
    </citation>
    <scope>X-RAY CRYSTALLOGRAPHY (2.55 ANGSTROMS)</scope>
</reference>
<comment type="function">
    <text>Catalyzes the transfer of the CoA moiety from acetyl-CoA to (R)-2-hydroxyglutarate and related compounds like glutaconate.</text>
</comment>
<comment type="catalytic activity">
    <reaction>
        <text>trans-glutaconate + acetyl-CoA = (2E)-glutaconyl-CoA + acetate</text>
        <dbReference type="Rhea" id="RHEA:23208"/>
        <dbReference type="ChEBI" id="CHEBI:30089"/>
        <dbReference type="ChEBI" id="CHEBI:36460"/>
        <dbReference type="ChEBI" id="CHEBI:57288"/>
        <dbReference type="ChEBI" id="CHEBI:57353"/>
        <dbReference type="EC" id="2.8.3.12"/>
    </reaction>
</comment>
<comment type="pathway">
    <text>Amino-acid degradation; L-glutamate degradation via hydroxyglutarate pathway; crotonoyl-CoA from L-glutamate: step 3/5.</text>
</comment>
<comment type="subunit">
    <text>Heterooctamer of four A and four B subunits.</text>
</comment>
<comment type="subcellular location">
    <subcellularLocation>
        <location>Cytoplasm</location>
    </subcellularLocation>
</comment>
<comment type="similarity">
    <text evidence="2">Belongs to the 3-oxoacid CoA-transferase subunit B family.</text>
</comment>
<proteinExistence type="evidence at protein level"/>
<feature type="initiator methionine" description="Removed" evidence="1">
    <location>
        <position position="1"/>
    </location>
</feature>
<feature type="chain" id="PRO_0000157930" description="Glutaconate CoA-transferase subunit B">
    <location>
        <begin position="2"/>
        <end position="266"/>
    </location>
</feature>
<feature type="active site">
    <location>
        <position position="54"/>
    </location>
</feature>
<feature type="helix" evidence="3">
    <location>
        <begin position="9"/>
        <end position="18"/>
    </location>
</feature>
<feature type="strand" evidence="3">
    <location>
        <begin position="26"/>
        <end position="28"/>
    </location>
</feature>
<feature type="helix" evidence="3">
    <location>
        <begin position="33"/>
        <end position="43"/>
    </location>
</feature>
<feature type="strand" evidence="3">
    <location>
        <begin position="50"/>
        <end position="53"/>
    </location>
</feature>
<feature type="turn" evidence="3">
    <location>
        <begin position="54"/>
        <end position="56"/>
    </location>
</feature>
<feature type="strand" evidence="3">
    <location>
        <begin position="57"/>
        <end position="60"/>
    </location>
</feature>
<feature type="helix" evidence="3">
    <location>
        <begin position="72"/>
        <end position="75"/>
    </location>
</feature>
<feature type="strand" evidence="3">
    <location>
        <begin position="77"/>
        <end position="81"/>
    </location>
</feature>
<feature type="helix" evidence="3">
    <location>
        <begin position="84"/>
        <end position="97"/>
    </location>
</feature>
<feature type="strand" evidence="3">
    <location>
        <begin position="102"/>
        <end position="106"/>
    </location>
</feature>
<feature type="strand" evidence="3">
    <location>
        <begin position="109"/>
        <end position="111"/>
    </location>
</feature>
<feature type="strand" evidence="3">
    <location>
        <begin position="120"/>
        <end position="123"/>
    </location>
</feature>
<feature type="strand" evidence="3">
    <location>
        <begin position="125"/>
        <end position="131"/>
    </location>
</feature>
<feature type="helix" evidence="3">
    <location>
        <begin position="138"/>
        <end position="144"/>
    </location>
</feature>
<feature type="strand" evidence="3">
    <location>
        <begin position="147"/>
        <end position="150"/>
    </location>
</feature>
<feature type="turn" evidence="3">
    <location>
        <begin position="155"/>
        <end position="157"/>
    </location>
</feature>
<feature type="helix" evidence="3">
    <location>
        <begin position="176"/>
        <end position="179"/>
    </location>
</feature>
<feature type="strand" evidence="3">
    <location>
        <begin position="188"/>
        <end position="193"/>
    </location>
</feature>
<feature type="strand" evidence="3">
    <location>
        <begin position="196"/>
        <end position="200"/>
    </location>
</feature>
<feature type="turn" evidence="3">
    <location>
        <begin position="202"/>
        <end position="204"/>
    </location>
</feature>
<feature type="strand" evidence="3">
    <location>
        <begin position="207"/>
        <end position="212"/>
    </location>
</feature>
<feature type="helix" evidence="3">
    <location>
        <begin position="218"/>
        <end position="223"/>
    </location>
</feature>
<feature type="helix" evidence="3">
    <location>
        <begin position="242"/>
        <end position="250"/>
    </location>
</feature>
<organism>
    <name type="scientific">Acidaminococcus fermentans (strain ATCC 25085 / DSM 20731 / CCUG 9996 / CIP 106432 / VR4)</name>
    <dbReference type="NCBI Taxonomy" id="591001"/>
    <lineage>
        <taxon>Bacteria</taxon>
        <taxon>Bacillati</taxon>
        <taxon>Bacillota</taxon>
        <taxon>Negativicutes</taxon>
        <taxon>Acidaminococcales</taxon>
        <taxon>Acidaminococcaceae</taxon>
        <taxon>Acidaminococcus</taxon>
    </lineage>
</organism>
<accession>Q59112</accession>
<accession>D2RM70</accession>
<evidence type="ECO:0000269" key="1">
    <source>
    </source>
</evidence>
<evidence type="ECO:0000305" key="2"/>
<evidence type="ECO:0007829" key="3">
    <source>
        <dbReference type="PDB" id="1POI"/>
    </source>
</evidence>
<protein>
    <recommendedName>
        <fullName>Glutaconate CoA-transferase subunit B</fullName>
        <ecNumber>2.8.3.12</ecNumber>
    </recommendedName>
    <alternativeName>
        <fullName>GCT small subunit</fullName>
    </alternativeName>
</protein>
<dbReference type="EC" id="2.8.3.12"/>
<dbReference type="EMBL" id="X81440">
    <property type="protein sequence ID" value="CAA57200.1"/>
    <property type="molecule type" value="Genomic_DNA"/>
</dbReference>
<dbReference type="EMBL" id="CP001859">
    <property type="protein sequence ID" value="ADB48172.1"/>
    <property type="molecule type" value="Genomic_DNA"/>
</dbReference>
<dbReference type="PIR" id="S51052">
    <property type="entry name" value="S51052"/>
</dbReference>
<dbReference type="RefSeq" id="WP_012939155.1">
    <property type="nucleotide sequence ID" value="NC_013740.1"/>
</dbReference>
<dbReference type="PDB" id="1POI">
    <property type="method" value="X-ray"/>
    <property type="resolution" value="2.50 A"/>
    <property type="chains" value="B/D=3-262"/>
</dbReference>
<dbReference type="PDBsum" id="1POI"/>
<dbReference type="SMR" id="Q59112"/>
<dbReference type="DIP" id="DIP-6201N"/>
<dbReference type="IntAct" id="Q59112">
    <property type="interactions" value="1"/>
</dbReference>
<dbReference type="STRING" id="591001.Acfer_1818"/>
<dbReference type="GeneID" id="78335514"/>
<dbReference type="KEGG" id="afn:Acfer_1818"/>
<dbReference type="eggNOG" id="COG2057">
    <property type="taxonomic scope" value="Bacteria"/>
</dbReference>
<dbReference type="HOGENOM" id="CLU_069088_0_0_9"/>
<dbReference type="OrthoDB" id="9805230at2"/>
<dbReference type="BioCyc" id="MetaCyc:MONOMER-1029"/>
<dbReference type="BRENDA" id="2.8.3.12">
    <property type="organism ID" value="85"/>
</dbReference>
<dbReference type="SABIO-RK" id="Q59112"/>
<dbReference type="UniPathway" id="UPA00533">
    <property type="reaction ID" value="UER00686"/>
</dbReference>
<dbReference type="EvolutionaryTrace" id="Q59112"/>
<dbReference type="Proteomes" id="UP000001902">
    <property type="component" value="Chromosome"/>
</dbReference>
<dbReference type="GO" id="GO:0005737">
    <property type="term" value="C:cytoplasm"/>
    <property type="evidence" value="ECO:0007669"/>
    <property type="project" value="UniProtKB-SubCell"/>
</dbReference>
<dbReference type="GO" id="GO:0018730">
    <property type="term" value="F:glutaconate CoA-transferase activity"/>
    <property type="evidence" value="ECO:0007669"/>
    <property type="project" value="UniProtKB-EC"/>
</dbReference>
<dbReference type="GO" id="GO:0019552">
    <property type="term" value="P:glutamate catabolic process via 2-hydroxyglutarate"/>
    <property type="evidence" value="ECO:0007669"/>
    <property type="project" value="UniProtKB-UniPathway"/>
</dbReference>
<dbReference type="Gene3D" id="3.40.1080.10">
    <property type="entry name" value="Glutaconate Coenzyme A-transferase"/>
    <property type="match status" value="1"/>
</dbReference>
<dbReference type="InterPro" id="IPR004165">
    <property type="entry name" value="CoA_trans_fam_I"/>
</dbReference>
<dbReference type="InterPro" id="IPR037171">
    <property type="entry name" value="NagB/RpiA_transferase-like"/>
</dbReference>
<dbReference type="PANTHER" id="PTHR43293">
    <property type="entry name" value="ACETATE COA-TRANSFERASE YDIF"/>
    <property type="match status" value="1"/>
</dbReference>
<dbReference type="PANTHER" id="PTHR43293:SF3">
    <property type="entry name" value="CHOLESTEROL RING-CLEAVING HYDROLASE IPDB SUBUNIT"/>
    <property type="match status" value="1"/>
</dbReference>
<dbReference type="Pfam" id="PF01144">
    <property type="entry name" value="CoA_trans"/>
    <property type="match status" value="1"/>
</dbReference>
<dbReference type="SMART" id="SM00882">
    <property type="entry name" value="CoA_trans"/>
    <property type="match status" value="1"/>
</dbReference>
<dbReference type="SUPFAM" id="SSF100950">
    <property type="entry name" value="NagB/RpiA/CoA transferase-like"/>
    <property type="match status" value="1"/>
</dbReference>